<protein>
    <recommendedName>
        <fullName>3-succinoylsemialdehyde-pyridine dehydrogenase</fullName>
        <shortName>SAPD</shortName>
        <ecNumber>1.2.1.83</ecNumber>
    </recommendedName>
</protein>
<gene>
    <name type="primary">ald</name>
</gene>
<organism>
    <name type="scientific">Pseudomonas sp</name>
    <dbReference type="NCBI Taxonomy" id="306"/>
    <lineage>
        <taxon>Bacteria</taxon>
        <taxon>Pseudomonadati</taxon>
        <taxon>Pseudomonadota</taxon>
        <taxon>Gammaproteobacteria</taxon>
        <taxon>Pseudomonadales</taxon>
        <taxon>Pseudomonadaceae</taxon>
        <taxon>Pseudomonas</taxon>
    </lineage>
</organism>
<keyword id="KW-0521">NADP</keyword>
<keyword id="KW-0560">Oxidoreductase</keyword>
<sequence length="477" mass="51246">MRDYREFYIDGQWVRPKGAREAEVINPATEKIVGLISLGTEEHVDLAVRAARRAFDGWSRTSKDQRLELLEQVCRAFESKLDEIAKAITEEMGAPLVQLALPLQAPAGLGHFLTAASILRDYDFEESLGTTRVVREPAGVCGLITPWNWPLNQIAAKVAPALAAGCTMVLKPSEIAPFSAYLLARIFDEVGVPPGVFNLVNGDGPGVGAPLAAHPEVDLVSFTGSTRAGTLVSTAAAPTVKRVALELGGKSANIILDDADLETAVKHGVRTMMLNTGQSCNAPSRMLVPLSKLDEVEHLAEHFCKEIVVGDPMHSDTNIGPLASGMQYEKVQDCIRQGVAEGAKLICGGLGRPDGLESGYFAQPTIFSAVNKQMYIAREEIFGPVLCIMPYGDENEAIQIANDSCYGLSGYVSSGSLERARNVAKQLRTGAVHLNGAALDFTAPFGGYKQSGNGREWGKYGFEEFLEIKAVMGYEGS</sequence>
<dbReference type="EC" id="1.2.1.83"/>
<dbReference type="EMBL" id="JN391188">
    <property type="protein sequence ID" value="AFD54464.1"/>
    <property type="molecule type" value="Genomic_DNA"/>
</dbReference>
<dbReference type="SMR" id="H8ZPX2"/>
<dbReference type="KEGG" id="ag:AFD54464"/>
<dbReference type="BRENDA" id="1.2.1.83">
    <property type="organism ID" value="5085"/>
</dbReference>
<dbReference type="UniPathway" id="UPA00106"/>
<dbReference type="GO" id="GO:0016620">
    <property type="term" value="F:oxidoreductase activity, acting on the aldehyde or oxo group of donors, NAD or NADP as acceptor"/>
    <property type="evidence" value="ECO:0000314"/>
    <property type="project" value="UniProtKB"/>
</dbReference>
<dbReference type="GO" id="GO:0019608">
    <property type="term" value="P:nicotine catabolic process"/>
    <property type="evidence" value="ECO:0000314"/>
    <property type="project" value="UniProtKB"/>
</dbReference>
<dbReference type="CDD" id="cd07138">
    <property type="entry name" value="ALDH_CddD_SSP0762"/>
    <property type="match status" value="1"/>
</dbReference>
<dbReference type="FunFam" id="3.40.309.10:FF:000012">
    <property type="entry name" value="Betaine aldehyde dehydrogenase"/>
    <property type="match status" value="1"/>
</dbReference>
<dbReference type="FunFam" id="3.40.605.10:FF:000007">
    <property type="entry name" value="NAD/NADP-dependent betaine aldehyde dehydrogenase"/>
    <property type="match status" value="1"/>
</dbReference>
<dbReference type="Gene3D" id="3.40.605.10">
    <property type="entry name" value="Aldehyde Dehydrogenase, Chain A, domain 1"/>
    <property type="match status" value="1"/>
</dbReference>
<dbReference type="Gene3D" id="3.40.309.10">
    <property type="entry name" value="Aldehyde Dehydrogenase, Chain A, domain 2"/>
    <property type="match status" value="1"/>
</dbReference>
<dbReference type="InterPro" id="IPR016161">
    <property type="entry name" value="Ald_DH/histidinol_DH"/>
</dbReference>
<dbReference type="InterPro" id="IPR016163">
    <property type="entry name" value="Ald_DH_C"/>
</dbReference>
<dbReference type="InterPro" id="IPR029510">
    <property type="entry name" value="Ald_DH_CS_GLU"/>
</dbReference>
<dbReference type="InterPro" id="IPR016162">
    <property type="entry name" value="Ald_DH_N"/>
</dbReference>
<dbReference type="InterPro" id="IPR015590">
    <property type="entry name" value="Aldehyde_DH_dom"/>
</dbReference>
<dbReference type="PANTHER" id="PTHR42804">
    <property type="entry name" value="ALDEHYDE DEHYDROGENASE"/>
    <property type="match status" value="1"/>
</dbReference>
<dbReference type="PANTHER" id="PTHR42804:SF1">
    <property type="entry name" value="ALDEHYDE DEHYDROGENASE-RELATED"/>
    <property type="match status" value="1"/>
</dbReference>
<dbReference type="Pfam" id="PF00171">
    <property type="entry name" value="Aldedh"/>
    <property type="match status" value="1"/>
</dbReference>
<dbReference type="SUPFAM" id="SSF53720">
    <property type="entry name" value="ALDH-like"/>
    <property type="match status" value="1"/>
</dbReference>
<dbReference type="PROSITE" id="PS00687">
    <property type="entry name" value="ALDEHYDE_DEHYDR_GLU"/>
    <property type="match status" value="1"/>
</dbReference>
<evidence type="ECO:0000250" key="1"/>
<evidence type="ECO:0000255" key="2">
    <source>
        <dbReference type="PROSITE-ProRule" id="PRU10007"/>
    </source>
</evidence>
<evidence type="ECO:0000269" key="3">
    <source>
    </source>
</evidence>
<evidence type="ECO:0000305" key="4"/>
<name>SAPD_PSESP</name>
<comment type="function">
    <text evidence="3">Catalyzes the dehydrogenation of 3-succinoylsemialdehyde-pyridine to 3-succinoyl-pyridine in the nicotine degradation pathway.</text>
</comment>
<comment type="catalytic activity">
    <reaction evidence="3">
        <text>4-oxo-4-(pyridin-3-yl)butanal + NADP(+) + H2O = 4-oxo-4-(pyridin-3-yl)butanoate + NADPH + 2 H(+)</text>
        <dbReference type="Rhea" id="RHEA:34215"/>
        <dbReference type="ChEBI" id="CHEBI:15377"/>
        <dbReference type="ChEBI" id="CHEBI:15378"/>
        <dbReference type="ChEBI" id="CHEBI:57783"/>
        <dbReference type="ChEBI" id="CHEBI:58349"/>
        <dbReference type="ChEBI" id="CHEBI:66879"/>
        <dbReference type="ChEBI" id="CHEBI:66942"/>
        <dbReference type="EC" id="1.2.1.83"/>
    </reaction>
</comment>
<comment type="pathway">
    <text evidence="3">Alkaloid degradation; nicotine degradation.</text>
</comment>
<comment type="similarity">
    <text evidence="4">Belongs to the aldehyde dehydrogenase family.</text>
</comment>
<proteinExistence type="evidence at protein level"/>
<feature type="chain" id="PRO_0000421822" description="3-succinoylsemialdehyde-pyridine dehydrogenase">
    <location>
        <begin position="1"/>
        <end position="477"/>
    </location>
</feature>
<feature type="active site" evidence="2">
    <location>
        <position position="246"/>
    </location>
</feature>
<feature type="active site" evidence="2">
    <location>
        <position position="280"/>
    </location>
</feature>
<feature type="binding site" evidence="1">
    <location>
        <begin position="202"/>
        <end position="208"/>
    </location>
    <ligand>
        <name>NAD(+)</name>
        <dbReference type="ChEBI" id="CHEBI:57540"/>
    </ligand>
</feature>
<reference key="1">
    <citation type="journal article" date="2012" name="Appl. Environ. Microbiol.">
        <title>Functional identification of two novel genes from Pseudomonas sp. strain HZN6 involved in the catabolism of nicotine.</title>
        <authorList>
            <person name="Qiu J."/>
            <person name="Ma Y."/>
            <person name="Wen Y."/>
            <person name="Chen L."/>
            <person name="Wu L."/>
            <person name="Liu W."/>
        </authorList>
    </citation>
    <scope>NUCLEOTIDE SEQUENCE [GENOMIC DNA]</scope>
    <scope>FUNCTION</scope>
    <scope>PATHWAY</scope>
    <scope>CATALYTIC ACTIVITY</scope>
    <source>
        <strain>HZN6</strain>
    </source>
</reference>
<accession>H8ZPX2</accession>